<accession>Q2G0N5</accession>
<accession>P47770</accession>
<accession>P77942</accession>
<reference key="1">
    <citation type="book" date="2006" name="Gram positive pathogens, 2nd edition">
        <title>The Staphylococcus aureus NCTC 8325 genome.</title>
        <editorList>
            <person name="Fischetti V."/>
            <person name="Novick R."/>
            <person name="Ferretti J."/>
            <person name="Portnoy D."/>
            <person name="Rood J."/>
        </editorList>
        <authorList>
            <person name="Gillaspy A.F."/>
            <person name="Worrell V."/>
            <person name="Orvis J."/>
            <person name="Roe B.A."/>
            <person name="Dyer D.W."/>
            <person name="Iandolo J.J."/>
        </authorList>
    </citation>
    <scope>NUCLEOTIDE SEQUENCE [LARGE SCALE GENOMIC DNA]</scope>
    <source>
        <strain>NCTC 8325 / PS 47</strain>
    </source>
</reference>
<reference key="2">
    <citation type="journal article" date="1992" name="J. Gen. Microbiol.">
        <title>Cloning and physical mapping of the Staphylococcus aureus rplL, rpoB and rpoC genes, encoding ribosomal protein L7/L12 and RNA polymerase subunits beta and beta'.</title>
        <authorList>
            <person name="Aboshkiwa M.A."/>
            <person name="Coleman G."/>
            <person name="Rowland G.C."/>
        </authorList>
    </citation>
    <scope>NUCLEOTIDE SEQUENCE [GENOMIC DNA] OF 52-155 AND 1019-1140</scope>
</reference>
<reference key="3">
    <citation type="journal article" date="1995" name="Biochim. Biophys. Acta">
        <title>Nucleotide sequence of the Staphylococcus aureus RNA polymerase rpoB gene and comparison of its predicted amino acid sequence with those of other bacteria.</title>
        <authorList>
            <person name="Aboshkiwa M.A."/>
            <person name="Rowland G."/>
            <person name="Coleman G."/>
        </authorList>
    </citation>
    <scope>NUCLEOTIDE SEQUENCE [GENOMIC DNA] OF 1-555</scope>
</reference>
<evidence type="ECO:0000255" key="1">
    <source>
        <dbReference type="HAMAP-Rule" id="MF_01322"/>
    </source>
</evidence>
<evidence type="ECO:0000305" key="2"/>
<evidence type="ECO:0000305" key="3">
    <source>
    </source>
</evidence>
<sequence length="1207" mass="135409">MIDVNNFHYMKIGLASPEKIRSWSFGEVKKPETINYRTLKPEKDGLFCERIFGPTKDWECSCGKYKRVRYKGMVCDRCGVEVTKSKVRRERMGHIELAAPVSHIWYFKGIPSRMGLLLDMSPRALEEVIYFASYVVVDPGPTGLEKKTLLSEAEFRDYYDKYPGQFVAKMGAEGIKDLLEEIDLDEELKLLRDELESATGQRLTRAIKRLEVVESFRNSGNKPSWMILDVLPIIPPEIRPMVQLDGGRFATSDLNDLYRRVINRNNRLKRLLDLGAPGIIVQNEKRMLQEAVDALIDNGRRGRPVTGPGNRPLKSLSHMLKGKQGRFRQNLLGKRVDYSGRSVIAVGPSLKMYQCGLPKEMALELFKPFVMKELVQREIATNIKNAKSKIERMDDEVWDVLEEVIREHPVLLNRAPTLHRLGIQAFEPTLVEGRAIRLHPLVTTAYNADFDGDQMAVHVPLSKEAQAEARMLMLAAQNILNPKDGKPVVTPSQDMVLGNYYLTLERKDAVNTGAIFNNTNEVLKAYANGFVHLHTRIGVHASSFNNPTFTEEQNKKILATSVGKIIFNEIIPDSFAYINEPTQENLERKTPNRYFIDPTTLGEGGLKEYFENEELIEPFNKKFLGNIIAEVFNRFSITDTSMMLDRMKDLGFKFSSKAGITVGVADIVVLPDKQQILDEHEKLVDRITKQFNRGLITEEERYNAVVEIWTDAKDQIQGELMQSLDKTNPIFMMSDSGARGNASNFTQLAGMRGLMAAPSGKIIELPITSSFREGLTVLEYFISTHGARKGLADTALKTADSGYLTRRLVDVAQDVIVREEDCGTDRGLLVSDIKEGTEMIEPFIERIEGRYSKETIRHPETDEIIIRPDELITPEIAKKITDAGIEQMYIRSAFTCNARHGVCEKCYGKNLATGEKVEVGEAVGTIAAQSIGEPGTQLTMRTFHTGGVAGSDITQGLPRIQEIFEARNPKGQAVITEIEGVVEDIKLAKDRQQEIVVKGANETRSYLASGTSRIIVEIGQPVQRGEVLTEGSIEPKNYLSVAGLNATESYLLKEVQKVYRMQGVEIDDKHVEVMVRQMLRKVRIIEAGDTKLLPGSLVDIHNFTDANREAFKHRKRPATAKPVLLGITKASLETESFLSAASFQETTRVLTDAAIKGKRDDLLGLKENVIIGKLIPAGTGMRRYSDVKYEKTAKPVAEVESQTEVTE</sequence>
<organism>
    <name type="scientific">Staphylococcus aureus (strain NCTC 8325 / PS 47)</name>
    <dbReference type="NCBI Taxonomy" id="93061"/>
    <lineage>
        <taxon>Bacteria</taxon>
        <taxon>Bacillati</taxon>
        <taxon>Bacillota</taxon>
        <taxon>Bacilli</taxon>
        <taxon>Bacillales</taxon>
        <taxon>Staphylococcaceae</taxon>
        <taxon>Staphylococcus</taxon>
    </lineage>
</organism>
<dbReference type="EC" id="2.7.7.6" evidence="1"/>
<dbReference type="EMBL" id="CP000253">
    <property type="protein sequence ID" value="ABD29673.1"/>
    <property type="status" value="ALT_INIT"/>
    <property type="molecule type" value="Genomic_DNA"/>
</dbReference>
<dbReference type="EMBL" id="X64172">
    <property type="protein sequence ID" value="CAA45513.1"/>
    <property type="molecule type" value="Genomic_DNA"/>
</dbReference>
<dbReference type="PIR" id="S59956">
    <property type="entry name" value="S59956"/>
</dbReference>
<dbReference type="RefSeq" id="YP_499097.1">
    <property type="nucleotide sequence ID" value="NC_007795.1"/>
</dbReference>
<dbReference type="PDB" id="8X6F">
    <property type="method" value="EM"/>
    <property type="resolution" value="3.70 A"/>
    <property type="chains" value="D=1-1207"/>
</dbReference>
<dbReference type="PDB" id="8X6G">
    <property type="method" value="EM"/>
    <property type="resolution" value="3.30 A"/>
    <property type="chains" value="D=1-1207"/>
</dbReference>
<dbReference type="PDBsum" id="8X6F"/>
<dbReference type="PDBsum" id="8X6G"/>
<dbReference type="SMR" id="Q2G0N5"/>
<dbReference type="STRING" id="93061.SAOUHSC_00525"/>
<dbReference type="PaxDb" id="1280-SAXN108_0597"/>
<dbReference type="GeneID" id="3920378"/>
<dbReference type="KEGG" id="sao:SAOUHSC_00525"/>
<dbReference type="PATRIC" id="fig|93061.5.peg.471"/>
<dbReference type="eggNOG" id="COG0086">
    <property type="taxonomic scope" value="Bacteria"/>
</dbReference>
<dbReference type="HOGENOM" id="CLU_000524_3_1_9"/>
<dbReference type="OrthoDB" id="9815296at2"/>
<dbReference type="Proteomes" id="UP000008816">
    <property type="component" value="Chromosome"/>
</dbReference>
<dbReference type="GO" id="GO:0000428">
    <property type="term" value="C:DNA-directed RNA polymerase complex"/>
    <property type="evidence" value="ECO:0007669"/>
    <property type="project" value="UniProtKB-KW"/>
</dbReference>
<dbReference type="GO" id="GO:0003677">
    <property type="term" value="F:DNA binding"/>
    <property type="evidence" value="ECO:0007669"/>
    <property type="project" value="UniProtKB-UniRule"/>
</dbReference>
<dbReference type="GO" id="GO:0003899">
    <property type="term" value="F:DNA-directed RNA polymerase activity"/>
    <property type="evidence" value="ECO:0007669"/>
    <property type="project" value="UniProtKB-UniRule"/>
</dbReference>
<dbReference type="GO" id="GO:0000287">
    <property type="term" value="F:magnesium ion binding"/>
    <property type="evidence" value="ECO:0007669"/>
    <property type="project" value="UniProtKB-UniRule"/>
</dbReference>
<dbReference type="GO" id="GO:0008270">
    <property type="term" value="F:zinc ion binding"/>
    <property type="evidence" value="ECO:0007669"/>
    <property type="project" value="UniProtKB-UniRule"/>
</dbReference>
<dbReference type="GO" id="GO:0006351">
    <property type="term" value="P:DNA-templated transcription"/>
    <property type="evidence" value="ECO:0007669"/>
    <property type="project" value="UniProtKB-UniRule"/>
</dbReference>
<dbReference type="CDD" id="cd02655">
    <property type="entry name" value="RNAP_beta'_C"/>
    <property type="match status" value="1"/>
</dbReference>
<dbReference type="CDD" id="cd01609">
    <property type="entry name" value="RNAP_beta'_N"/>
    <property type="match status" value="1"/>
</dbReference>
<dbReference type="FunFam" id="1.10.132.30:FF:000003">
    <property type="entry name" value="DNA-directed RNA polymerase subunit beta"/>
    <property type="match status" value="1"/>
</dbReference>
<dbReference type="FunFam" id="1.10.150.390:FF:000002">
    <property type="entry name" value="DNA-directed RNA polymerase subunit beta"/>
    <property type="match status" value="1"/>
</dbReference>
<dbReference type="FunFam" id="4.10.860.120:FF:000001">
    <property type="entry name" value="DNA-directed RNA polymerase subunit beta"/>
    <property type="match status" value="1"/>
</dbReference>
<dbReference type="Gene3D" id="1.10.132.30">
    <property type="match status" value="1"/>
</dbReference>
<dbReference type="Gene3D" id="1.10.150.390">
    <property type="match status" value="1"/>
</dbReference>
<dbReference type="Gene3D" id="1.10.1790.20">
    <property type="match status" value="1"/>
</dbReference>
<dbReference type="Gene3D" id="1.10.40.90">
    <property type="match status" value="1"/>
</dbReference>
<dbReference type="Gene3D" id="2.40.40.20">
    <property type="match status" value="1"/>
</dbReference>
<dbReference type="Gene3D" id="2.40.50.100">
    <property type="match status" value="1"/>
</dbReference>
<dbReference type="Gene3D" id="4.10.860.120">
    <property type="entry name" value="RNA polymerase II, clamp domain"/>
    <property type="match status" value="1"/>
</dbReference>
<dbReference type="Gene3D" id="1.10.274.100">
    <property type="entry name" value="RNA polymerase Rpb1, domain 3"/>
    <property type="match status" value="1"/>
</dbReference>
<dbReference type="HAMAP" id="MF_01322">
    <property type="entry name" value="RNApol_bact_RpoC"/>
    <property type="match status" value="1"/>
</dbReference>
<dbReference type="InterPro" id="IPR045867">
    <property type="entry name" value="DNA-dir_RpoC_beta_prime"/>
</dbReference>
<dbReference type="InterPro" id="IPR012754">
    <property type="entry name" value="DNA-dir_RpoC_beta_prime_bact"/>
</dbReference>
<dbReference type="InterPro" id="IPR000722">
    <property type="entry name" value="RNA_pol_asu"/>
</dbReference>
<dbReference type="InterPro" id="IPR006592">
    <property type="entry name" value="RNA_pol_N"/>
</dbReference>
<dbReference type="InterPro" id="IPR007080">
    <property type="entry name" value="RNA_pol_Rpb1_1"/>
</dbReference>
<dbReference type="InterPro" id="IPR007066">
    <property type="entry name" value="RNA_pol_Rpb1_3"/>
</dbReference>
<dbReference type="InterPro" id="IPR042102">
    <property type="entry name" value="RNA_pol_Rpb1_3_sf"/>
</dbReference>
<dbReference type="InterPro" id="IPR007083">
    <property type="entry name" value="RNA_pol_Rpb1_4"/>
</dbReference>
<dbReference type="InterPro" id="IPR007081">
    <property type="entry name" value="RNA_pol_Rpb1_5"/>
</dbReference>
<dbReference type="InterPro" id="IPR044893">
    <property type="entry name" value="RNA_pol_Rpb1_clamp_domain"/>
</dbReference>
<dbReference type="InterPro" id="IPR038120">
    <property type="entry name" value="Rpb1_funnel_sf"/>
</dbReference>
<dbReference type="NCBIfam" id="TIGR02386">
    <property type="entry name" value="rpoC_TIGR"/>
    <property type="match status" value="1"/>
</dbReference>
<dbReference type="PANTHER" id="PTHR19376">
    <property type="entry name" value="DNA-DIRECTED RNA POLYMERASE"/>
    <property type="match status" value="1"/>
</dbReference>
<dbReference type="PANTHER" id="PTHR19376:SF54">
    <property type="entry name" value="DNA-DIRECTED RNA POLYMERASE SUBUNIT BETA"/>
    <property type="match status" value="1"/>
</dbReference>
<dbReference type="Pfam" id="PF04997">
    <property type="entry name" value="RNA_pol_Rpb1_1"/>
    <property type="match status" value="1"/>
</dbReference>
<dbReference type="Pfam" id="PF00623">
    <property type="entry name" value="RNA_pol_Rpb1_2"/>
    <property type="match status" value="1"/>
</dbReference>
<dbReference type="Pfam" id="PF04983">
    <property type="entry name" value="RNA_pol_Rpb1_3"/>
    <property type="match status" value="1"/>
</dbReference>
<dbReference type="Pfam" id="PF05000">
    <property type="entry name" value="RNA_pol_Rpb1_4"/>
    <property type="match status" value="1"/>
</dbReference>
<dbReference type="Pfam" id="PF04998">
    <property type="entry name" value="RNA_pol_Rpb1_5"/>
    <property type="match status" value="1"/>
</dbReference>
<dbReference type="SMART" id="SM00663">
    <property type="entry name" value="RPOLA_N"/>
    <property type="match status" value="1"/>
</dbReference>
<dbReference type="SUPFAM" id="SSF64484">
    <property type="entry name" value="beta and beta-prime subunits of DNA dependent RNA-polymerase"/>
    <property type="match status" value="1"/>
</dbReference>
<gene>
    <name evidence="1" type="primary">rpoC</name>
    <name type="ordered locus">SAOUHSC_00525</name>
</gene>
<feature type="chain" id="PRO_0000248949" description="DNA-directed RNA polymerase subunit beta'">
    <location>
        <begin position="1"/>
        <end position="1207"/>
    </location>
</feature>
<feature type="binding site" evidence="1">
    <location>
        <position position="60"/>
    </location>
    <ligand>
        <name>Zn(2+)</name>
        <dbReference type="ChEBI" id="CHEBI:29105"/>
        <label>1</label>
    </ligand>
</feature>
<feature type="binding site" evidence="1">
    <location>
        <position position="62"/>
    </location>
    <ligand>
        <name>Zn(2+)</name>
        <dbReference type="ChEBI" id="CHEBI:29105"/>
        <label>1</label>
    </ligand>
</feature>
<feature type="binding site" evidence="1">
    <location>
        <position position="75"/>
    </location>
    <ligand>
        <name>Zn(2+)</name>
        <dbReference type="ChEBI" id="CHEBI:29105"/>
        <label>1</label>
    </ligand>
</feature>
<feature type="binding site" evidence="1">
    <location>
        <position position="78"/>
    </location>
    <ligand>
        <name>Zn(2+)</name>
        <dbReference type="ChEBI" id="CHEBI:29105"/>
        <label>1</label>
    </ligand>
</feature>
<feature type="binding site" evidence="1">
    <location>
        <position position="449"/>
    </location>
    <ligand>
        <name>Mg(2+)</name>
        <dbReference type="ChEBI" id="CHEBI:18420"/>
    </ligand>
</feature>
<feature type="binding site" evidence="1">
    <location>
        <position position="451"/>
    </location>
    <ligand>
        <name>Mg(2+)</name>
        <dbReference type="ChEBI" id="CHEBI:18420"/>
    </ligand>
</feature>
<feature type="binding site" evidence="1">
    <location>
        <position position="453"/>
    </location>
    <ligand>
        <name>Mg(2+)</name>
        <dbReference type="ChEBI" id="CHEBI:18420"/>
    </ligand>
</feature>
<feature type="binding site" evidence="1">
    <location>
        <position position="822"/>
    </location>
    <ligand>
        <name>Zn(2+)</name>
        <dbReference type="ChEBI" id="CHEBI:29105"/>
        <label>2</label>
    </ligand>
</feature>
<feature type="binding site" evidence="1">
    <location>
        <position position="896"/>
    </location>
    <ligand>
        <name>Zn(2+)</name>
        <dbReference type="ChEBI" id="CHEBI:29105"/>
        <label>2</label>
    </ligand>
</feature>
<feature type="binding site" evidence="1">
    <location>
        <position position="903"/>
    </location>
    <ligand>
        <name>Zn(2+)</name>
        <dbReference type="ChEBI" id="CHEBI:29105"/>
        <label>2</label>
    </ligand>
</feature>
<feature type="binding site" evidence="1">
    <location>
        <position position="906"/>
    </location>
    <ligand>
        <name>Zn(2+)</name>
        <dbReference type="ChEBI" id="CHEBI:29105"/>
        <label>2</label>
    </ligand>
</feature>
<name>RPOC_STAA8</name>
<comment type="function">
    <text evidence="1">DNA-dependent RNA polymerase catalyzes the transcription of DNA into RNA using the four ribonucleoside triphosphates as substrates.</text>
</comment>
<comment type="catalytic activity">
    <reaction evidence="1">
        <text>RNA(n) + a ribonucleoside 5'-triphosphate = RNA(n+1) + diphosphate</text>
        <dbReference type="Rhea" id="RHEA:21248"/>
        <dbReference type="Rhea" id="RHEA-COMP:14527"/>
        <dbReference type="Rhea" id="RHEA-COMP:17342"/>
        <dbReference type="ChEBI" id="CHEBI:33019"/>
        <dbReference type="ChEBI" id="CHEBI:61557"/>
        <dbReference type="ChEBI" id="CHEBI:140395"/>
        <dbReference type="EC" id="2.7.7.6"/>
    </reaction>
</comment>
<comment type="cofactor">
    <cofactor evidence="1">
        <name>Mg(2+)</name>
        <dbReference type="ChEBI" id="CHEBI:18420"/>
    </cofactor>
    <text evidence="1">Binds 1 Mg(2+) ion per subunit.</text>
</comment>
<comment type="cofactor">
    <cofactor evidence="1">
        <name>Zn(2+)</name>
        <dbReference type="ChEBI" id="CHEBI:29105"/>
    </cofactor>
    <text evidence="1">Binds 2 Zn(2+) ions per subunit.</text>
</comment>
<comment type="subunit">
    <text evidence="1">The RNAP catalytic core consists of 2 alpha, 1 beta, 1 beta' and 1 omega subunit. When a sigma factor is associated with the core the holoenzyme is formed, which can initiate transcription.</text>
</comment>
<comment type="miscellaneous">
    <text evidence="3">The sequence of residues 1057-1140 was published in Fig. 2 (PubMed:1402788) but not submitted to EMBL.</text>
</comment>
<comment type="similarity">
    <text evidence="1 2">Belongs to the RNA polymerase beta' chain family.</text>
</comment>
<comment type="sequence caution" evidence="2">
    <conflict type="erroneous initiation">
        <sequence resource="EMBL-CDS" id="ABD29673"/>
    </conflict>
    <text>Truncated N-terminus.</text>
</comment>
<proteinExistence type="evidence at protein level"/>
<protein>
    <recommendedName>
        <fullName evidence="1">DNA-directed RNA polymerase subunit beta'</fullName>
        <shortName evidence="1">RNAP subunit beta'</shortName>
        <ecNumber evidence="1">2.7.7.6</ecNumber>
    </recommendedName>
    <alternativeName>
        <fullName evidence="1">RNA polymerase subunit beta'</fullName>
    </alternativeName>
    <alternativeName>
        <fullName evidence="1">Transcriptase subunit beta'</fullName>
    </alternativeName>
</protein>
<keyword id="KW-0002">3D-structure</keyword>
<keyword id="KW-0240">DNA-directed RNA polymerase</keyword>
<keyword id="KW-0460">Magnesium</keyword>
<keyword id="KW-0479">Metal-binding</keyword>
<keyword id="KW-0548">Nucleotidyltransferase</keyword>
<keyword id="KW-1185">Reference proteome</keyword>
<keyword id="KW-0804">Transcription</keyword>
<keyword id="KW-0808">Transferase</keyword>
<keyword id="KW-0862">Zinc</keyword>